<name>MUCR_PSEAE</name>
<dbReference type="EC" id="2.7.7.65" evidence="5 7"/>
<dbReference type="EC" id="3.1.4.52" evidence="7"/>
<dbReference type="EMBL" id="AE004091">
    <property type="protein sequence ID" value="AAG05116.1"/>
    <property type="molecule type" value="Genomic_DNA"/>
</dbReference>
<dbReference type="PIR" id="H83428">
    <property type="entry name" value="H83428"/>
</dbReference>
<dbReference type="RefSeq" id="NP_250418.1">
    <property type="nucleotide sequence ID" value="NC_002516.2"/>
</dbReference>
<dbReference type="RefSeq" id="WP_003113558.1">
    <property type="nucleotide sequence ID" value="NZ_QZGE01000003.1"/>
</dbReference>
<dbReference type="PDB" id="5M1T">
    <property type="method" value="X-ray"/>
    <property type="resolution" value="2.27 A"/>
    <property type="chains" value="A/B=426-685"/>
</dbReference>
<dbReference type="PDBsum" id="5M1T"/>
<dbReference type="SMR" id="Q9I310"/>
<dbReference type="STRING" id="208964.PA1727"/>
<dbReference type="PaxDb" id="208964-PA1727"/>
<dbReference type="GeneID" id="881914"/>
<dbReference type="KEGG" id="pae:PA1727"/>
<dbReference type="PATRIC" id="fig|208964.12.peg.1789"/>
<dbReference type="PseudoCAP" id="PA1727"/>
<dbReference type="HOGENOM" id="CLU_000445_70_49_6"/>
<dbReference type="InParanoid" id="Q9I310"/>
<dbReference type="OrthoDB" id="9804951at2"/>
<dbReference type="PhylomeDB" id="Q9I310"/>
<dbReference type="BioCyc" id="PAER208964:G1FZ6-1758-MONOMER"/>
<dbReference type="Proteomes" id="UP000002438">
    <property type="component" value="Chromosome"/>
</dbReference>
<dbReference type="GO" id="GO:0005886">
    <property type="term" value="C:plasma membrane"/>
    <property type="evidence" value="ECO:0007669"/>
    <property type="project" value="UniProtKB-SubCell"/>
</dbReference>
<dbReference type="GO" id="GO:0071111">
    <property type="term" value="F:cyclic-guanylate-specific phosphodiesterase activity"/>
    <property type="evidence" value="ECO:0000314"/>
    <property type="project" value="PseudoCAP"/>
</dbReference>
<dbReference type="GO" id="GO:0052621">
    <property type="term" value="F:diguanylate cyclase activity"/>
    <property type="evidence" value="ECO:0000314"/>
    <property type="project" value="PseudoCAP"/>
</dbReference>
<dbReference type="GO" id="GO:0046872">
    <property type="term" value="F:metal ion binding"/>
    <property type="evidence" value="ECO:0007669"/>
    <property type="project" value="UniProtKB-KW"/>
</dbReference>
<dbReference type="GO" id="GO:0071732">
    <property type="term" value="P:cellular response to nitric oxide"/>
    <property type="evidence" value="ECO:0000315"/>
    <property type="project" value="PseudoCAP"/>
</dbReference>
<dbReference type="CDD" id="cd01948">
    <property type="entry name" value="EAL"/>
    <property type="match status" value="1"/>
</dbReference>
<dbReference type="CDD" id="cd01949">
    <property type="entry name" value="GGDEF"/>
    <property type="match status" value="1"/>
</dbReference>
<dbReference type="FunFam" id="3.20.20.450:FF:000001">
    <property type="entry name" value="Cyclic di-GMP phosphodiesterase yahA"/>
    <property type="match status" value="1"/>
</dbReference>
<dbReference type="FunFam" id="3.30.70.270:FF:000001">
    <property type="entry name" value="Diguanylate cyclase domain protein"/>
    <property type="match status" value="1"/>
</dbReference>
<dbReference type="Gene3D" id="3.30.70.270">
    <property type="match status" value="1"/>
</dbReference>
<dbReference type="Gene3D" id="3.20.20.450">
    <property type="entry name" value="EAL domain"/>
    <property type="match status" value="1"/>
</dbReference>
<dbReference type="InterPro" id="IPR052155">
    <property type="entry name" value="Biofilm_reg_signaling"/>
</dbReference>
<dbReference type="InterPro" id="IPR001633">
    <property type="entry name" value="EAL_dom"/>
</dbReference>
<dbReference type="InterPro" id="IPR035919">
    <property type="entry name" value="EAL_sf"/>
</dbReference>
<dbReference type="InterPro" id="IPR000160">
    <property type="entry name" value="GGDEF_dom"/>
</dbReference>
<dbReference type="InterPro" id="IPR005330">
    <property type="entry name" value="MHYT_dom"/>
</dbReference>
<dbReference type="InterPro" id="IPR029787">
    <property type="entry name" value="Nucleotide_cyclase"/>
</dbReference>
<dbReference type="InterPro" id="IPR043128">
    <property type="entry name" value="Rev_trsase/Diguanyl_cyclase"/>
</dbReference>
<dbReference type="NCBIfam" id="TIGR00254">
    <property type="entry name" value="GGDEF"/>
    <property type="match status" value="1"/>
</dbReference>
<dbReference type="PANTHER" id="PTHR44757:SF2">
    <property type="entry name" value="BIOFILM ARCHITECTURE MAINTENANCE PROTEIN MBAA"/>
    <property type="match status" value="1"/>
</dbReference>
<dbReference type="PANTHER" id="PTHR44757">
    <property type="entry name" value="DIGUANYLATE CYCLASE DGCP"/>
    <property type="match status" value="1"/>
</dbReference>
<dbReference type="Pfam" id="PF00563">
    <property type="entry name" value="EAL"/>
    <property type="match status" value="1"/>
</dbReference>
<dbReference type="Pfam" id="PF00990">
    <property type="entry name" value="GGDEF"/>
    <property type="match status" value="1"/>
</dbReference>
<dbReference type="Pfam" id="PF03707">
    <property type="entry name" value="MHYT"/>
    <property type="match status" value="3"/>
</dbReference>
<dbReference type="SMART" id="SM00052">
    <property type="entry name" value="EAL"/>
    <property type="match status" value="1"/>
</dbReference>
<dbReference type="SMART" id="SM00267">
    <property type="entry name" value="GGDEF"/>
    <property type="match status" value="1"/>
</dbReference>
<dbReference type="SUPFAM" id="SSF141868">
    <property type="entry name" value="EAL domain-like"/>
    <property type="match status" value="1"/>
</dbReference>
<dbReference type="SUPFAM" id="SSF55073">
    <property type="entry name" value="Nucleotide cyclase"/>
    <property type="match status" value="1"/>
</dbReference>
<dbReference type="PROSITE" id="PS50883">
    <property type="entry name" value="EAL"/>
    <property type="match status" value="1"/>
</dbReference>
<dbReference type="PROSITE" id="PS50887">
    <property type="entry name" value="GGDEF"/>
    <property type="match status" value="1"/>
</dbReference>
<dbReference type="PROSITE" id="PS50924">
    <property type="entry name" value="MHYT"/>
    <property type="match status" value="1"/>
</dbReference>
<proteinExistence type="evidence at protein level"/>
<reference key="1">
    <citation type="journal article" date="2000" name="Nature">
        <title>Complete genome sequence of Pseudomonas aeruginosa PAO1, an opportunistic pathogen.</title>
        <authorList>
            <person name="Stover C.K."/>
            <person name="Pham X.-Q.T."/>
            <person name="Erwin A.L."/>
            <person name="Mizoguchi S.D."/>
            <person name="Warrener P."/>
            <person name="Hickey M.J."/>
            <person name="Brinkman F.S.L."/>
            <person name="Hufnagle W.O."/>
            <person name="Kowalik D.J."/>
            <person name="Lagrou M."/>
            <person name="Garber R.L."/>
            <person name="Goltry L."/>
            <person name="Tolentino E."/>
            <person name="Westbrock-Wadman S."/>
            <person name="Yuan Y."/>
            <person name="Brody L.L."/>
            <person name="Coulter S.N."/>
            <person name="Folger K.R."/>
            <person name="Kas A."/>
            <person name="Larbig K."/>
            <person name="Lim R.M."/>
            <person name="Smith K.A."/>
            <person name="Spencer D.H."/>
            <person name="Wong G.K.-S."/>
            <person name="Wu Z."/>
            <person name="Paulsen I.T."/>
            <person name="Reizer J."/>
            <person name="Saier M.H. Jr."/>
            <person name="Hancock R.E.W."/>
            <person name="Lory S."/>
            <person name="Olson M.V."/>
        </authorList>
    </citation>
    <scope>NUCLEOTIDE SEQUENCE [LARGE SCALE GENOMIC DNA]</scope>
    <source>
        <strain>ATCC 15692 / DSM 22644 / CIP 104116 / JCM 14847 / LMG 12228 / 1C / PRS 101 / PAO1</strain>
    </source>
</reference>
<reference key="2">
    <citation type="journal article" date="2006" name="Proc. Natl. Acad. Sci. U.S.A.">
        <title>Analysis of Pseudomonas aeruginosa diguanylate cyclases and phosphodiesterases reveals a role for bis-(3'-5')-cyclic-GMP in virulence.</title>
        <authorList>
            <person name="Kulasakara H."/>
            <person name="Lee V."/>
            <person name="Brencic A."/>
            <person name="Liberati N."/>
            <person name="Urbach J."/>
            <person name="Miyata S."/>
            <person name="Lee D.G."/>
            <person name="Neely A.N."/>
            <person name="Hyodo M."/>
            <person name="Hayakawa Y."/>
            <person name="Ausubel F.M."/>
            <person name="Lory S."/>
        </authorList>
    </citation>
    <scope>FUNCTION AS A DIGUANYLATE CYCLASE</scope>
    <scope>CATALYTIC ACTIVITY</scope>
    <source>
        <strain>PA14</strain>
    </source>
</reference>
<reference key="3">
    <citation type="journal article" date="2006" name="Proc. Natl. Acad. Sci. U.S.A.">
        <authorList>
            <person name="Kulasakara H."/>
            <person name="Lee V."/>
            <person name="Brencic A."/>
            <person name="Liberati N."/>
            <person name="Urbach J."/>
            <person name="Miyata S."/>
            <person name="Lee D.G."/>
            <person name="Neely A.N."/>
            <person name="Hyodo M."/>
            <person name="Hayakawa Y."/>
            <person name="Ausubel F.M."/>
            <person name="Lory S."/>
        </authorList>
    </citation>
    <scope>ERRATUM OF PUBMED:16477007</scope>
</reference>
<reference key="4">
    <citation type="journal article" date="2009" name="Appl. Environ. Microbiol.">
        <title>MucR, a novel membrane-associated regulator of alginate biosynthesis in Pseudomonas aeruginosa.</title>
        <authorList>
            <person name="Hay I.D."/>
            <person name="Remminghorst U."/>
            <person name="Rehm B.H."/>
        </authorList>
    </citation>
    <scope>FUNCTION</scope>
    <scope>SUBCELLULAR LOCATION</scope>
    <scope>DISRUPTION PHENOTYPE</scope>
    <scope>DOMAIN</scope>
    <scope>IDENTIFICATION BY MASS SPECTROMETRY</scope>
    <source>
        <strain>ATCC 15692 / DSM 22644 / CIP 104116 / JCM 14847 / LMG 12228 / 1C / PRS 101 / PAO1</strain>
        <strain>PDO300</strain>
    </source>
</reference>
<reference key="5">
    <citation type="journal article" date="2013" name="J. Bacteriol.">
        <title>NO-induced biofilm dispersion in Pseudomonas aeruginosa is mediated by an MHYT domain-coupled phosphodiesterase.</title>
        <authorList>
            <person name="Li Y."/>
            <person name="Heine S."/>
            <person name="Entian M."/>
            <person name="Sauer K."/>
            <person name="Frankenberg-Dinkel N."/>
        </authorList>
    </citation>
    <scope>FUNCTION</scope>
    <scope>CATALYTIC ACTIVITY</scope>
    <scope>DISRUPTION PHENOTYPE</scope>
    <scope>MUTAGENESIS OF GLY-342</scope>
    <source>
        <strain>ATCC 15692 / DSM 22644 / CIP 104116 / JCM 14847 / LMG 12228 / 1C / PRS 101 / PAO1</strain>
    </source>
</reference>
<reference evidence="13" key="6">
    <citation type="journal article" date="2017" name="Sci. Rep.">
        <title>Dimerisation induced formation of the active site and the identification of three metal sites in EAL-phosphodiesterases.</title>
        <authorList>
            <person name="Bellini D."/>
            <person name="Horrell S."/>
            <person name="Hutchin A."/>
            <person name="Phippen C.W."/>
            <person name="Strange R.W."/>
            <person name="Cai Y."/>
            <person name="Wagner A."/>
            <person name="Webb J.S."/>
            <person name="Tews I."/>
            <person name="Walsh M.A."/>
        </authorList>
    </citation>
    <scope>X-RAY CRYSTALLOGRAPHY (2.27 ANGSTROMS) OF 426-685 IN COMPLEX WITH C-DI-GMP AND MG(2+)</scope>
    <scope>COFACTOR</scope>
    <scope>SUBUNIT</scope>
    <scope>DISRUPTION PHENOTYPE</scope>
    <source>
        <strain>ATCC 15692 / DSM 22644 / CIP 104116 / JCM 14847 / LMG 12228 / 1C / PRS 101 / PAO1</strain>
    </source>
</reference>
<organism>
    <name type="scientific">Pseudomonas aeruginosa (strain ATCC 15692 / DSM 22644 / CIP 104116 / JCM 14847 / LMG 12228 / 1C / PRS 101 / PAO1)</name>
    <dbReference type="NCBI Taxonomy" id="208964"/>
    <lineage>
        <taxon>Bacteria</taxon>
        <taxon>Pseudomonadati</taxon>
        <taxon>Pseudomonadota</taxon>
        <taxon>Gammaproteobacteria</taxon>
        <taxon>Pseudomonadales</taxon>
        <taxon>Pseudomonadaceae</taxon>
        <taxon>Pseudomonas</taxon>
    </lineage>
</organism>
<gene>
    <name evidence="9" type="primary">mucR</name>
    <name evidence="12" type="ordered locus">PA1727</name>
</gene>
<evidence type="ECO:0000255" key="1"/>
<evidence type="ECO:0000255" key="2">
    <source>
        <dbReference type="PROSITE-ProRule" id="PRU00074"/>
    </source>
</evidence>
<evidence type="ECO:0000255" key="3">
    <source>
        <dbReference type="PROSITE-ProRule" id="PRU00095"/>
    </source>
</evidence>
<evidence type="ECO:0000255" key="4">
    <source>
        <dbReference type="PROSITE-ProRule" id="PRU00244"/>
    </source>
</evidence>
<evidence type="ECO:0000269" key="5">
    <source>
    </source>
</evidence>
<evidence type="ECO:0000269" key="6">
    <source>
    </source>
</evidence>
<evidence type="ECO:0000269" key="7">
    <source>
    </source>
</evidence>
<evidence type="ECO:0000269" key="8">
    <source>
    </source>
</evidence>
<evidence type="ECO:0000303" key="9">
    <source>
    </source>
</evidence>
<evidence type="ECO:0000305" key="10"/>
<evidence type="ECO:0000305" key="11">
    <source>
    </source>
</evidence>
<evidence type="ECO:0000312" key="12">
    <source>
        <dbReference type="EMBL" id="AAG05116.1"/>
    </source>
</evidence>
<evidence type="ECO:0007744" key="13">
    <source>
        <dbReference type="PDB" id="5M1T"/>
    </source>
</evidence>
<evidence type="ECO:0007829" key="14">
    <source>
        <dbReference type="PDB" id="5M1T"/>
    </source>
</evidence>
<comment type="function">
    <text evidence="6 7">Displays both diguanylate cyclase (DGC) and c-di-GMP-specific phosphodiesterase (PDE) activity (PubMed:23729646). Probably modulates DGC and PDE activities, and thus c-di-GMP levels, in a growth mode-dependent manner (PubMed:23729646). May act as a PDE under planktonic growth conditions and as a DGC in biofilms (PubMed:23729646). During biofilm formation, it specifically activates alginate biosynthesis via generation of a localized c-di-GMP pool in the vicinity of the alginate biosynthesis protein Alg44 (PubMed:19088322).</text>
</comment>
<comment type="catalytic activity">
    <reaction evidence="5 7">
        <text>2 GTP = 3',3'-c-di-GMP + 2 diphosphate</text>
        <dbReference type="Rhea" id="RHEA:24898"/>
        <dbReference type="ChEBI" id="CHEBI:33019"/>
        <dbReference type="ChEBI" id="CHEBI:37565"/>
        <dbReference type="ChEBI" id="CHEBI:58805"/>
        <dbReference type="EC" id="2.7.7.65"/>
    </reaction>
    <physiologicalReaction direction="left-to-right" evidence="11">
        <dbReference type="Rhea" id="RHEA:24899"/>
    </physiologicalReaction>
</comment>
<comment type="catalytic activity">
    <reaction evidence="7">
        <text>3',3'-c-di-GMP + H2O = 5'-phosphoguanylyl(3'-&gt;5')guanosine + H(+)</text>
        <dbReference type="Rhea" id="RHEA:24902"/>
        <dbReference type="ChEBI" id="CHEBI:15377"/>
        <dbReference type="ChEBI" id="CHEBI:15378"/>
        <dbReference type="ChEBI" id="CHEBI:58754"/>
        <dbReference type="ChEBI" id="CHEBI:58805"/>
        <dbReference type="EC" id="3.1.4.52"/>
    </reaction>
    <physiologicalReaction direction="left-to-right" evidence="11">
        <dbReference type="Rhea" id="RHEA:24903"/>
    </physiologicalReaction>
</comment>
<comment type="cofactor">
    <cofactor evidence="8">
        <name>Mg(2+)</name>
        <dbReference type="ChEBI" id="CHEBI:18420"/>
    </cofactor>
    <text evidence="8">Binds 2 Mg(2+) ions per subunit.</text>
</comment>
<comment type="subunit">
    <text evidence="8">Homodimer.</text>
</comment>
<comment type="subcellular location">
    <subcellularLocation>
        <location evidence="6">Cell inner membrane</location>
        <topology evidence="1">Multi-pass membrane protein</topology>
    </subcellularLocation>
</comment>
<comment type="domain">
    <text evidence="6">The GGDEF and EAL domains are required for the alginate stimulating activity.</text>
</comment>
<comment type="disruption phenotype">
    <text evidence="6 7 8">Deletion of the gene in the mucoid alginate-overproducing strain PDO300 results in a nonmucoid phenotype and an about 38-fold decrease in alginate production (PubMed:19088322). Inactivation of the gene impairs biofilm dispersion in response to NO and glutamate (PubMed:23729646). Deletion results in increased swimming motility (PubMed:28186120). Loss of the gene does not influence swarming motility (PubMed:19088322).</text>
</comment>
<feature type="chain" id="PRO_0000170474" description="Bifunctional diguanylate cyclase/cyclic di-GMP phosphodiesterase MucR">
    <location>
        <begin position="1"/>
        <end position="685"/>
    </location>
</feature>
<feature type="transmembrane region" description="Helical" evidence="1">
    <location>
        <begin position="9"/>
        <end position="29"/>
    </location>
</feature>
<feature type="transmembrane region" description="Helical" evidence="1">
    <location>
        <begin position="44"/>
        <end position="64"/>
    </location>
</feature>
<feature type="transmembrane region" description="Helical" evidence="1">
    <location>
        <begin position="77"/>
        <end position="97"/>
    </location>
</feature>
<feature type="transmembrane region" description="Helical" evidence="1">
    <location>
        <begin position="117"/>
        <end position="137"/>
    </location>
</feature>
<feature type="transmembrane region" description="Helical" evidence="1">
    <location>
        <begin position="141"/>
        <end position="161"/>
    </location>
</feature>
<feature type="transmembrane region" description="Helical" evidence="1">
    <location>
        <begin position="175"/>
        <end position="195"/>
    </location>
</feature>
<feature type="transmembrane region" description="Helical" evidence="1">
    <location>
        <begin position="214"/>
        <end position="234"/>
    </location>
</feature>
<feature type="topological domain" description="Cytoplasmic" evidence="6">
    <location>
        <begin position="235"/>
        <end position="685"/>
    </location>
</feature>
<feature type="domain" description="MHYT" evidence="4">
    <location>
        <begin position="6"/>
        <end position="199"/>
    </location>
</feature>
<feature type="domain" description="GGDEF" evidence="3">
    <location>
        <begin position="293"/>
        <end position="425"/>
    </location>
</feature>
<feature type="domain" description="EAL" evidence="2">
    <location>
        <begin position="434"/>
        <end position="685"/>
    </location>
</feature>
<feature type="binding site" evidence="8 13">
    <location>
        <position position="455"/>
    </location>
    <ligand>
        <name>3',3'-c-di-GMP</name>
        <dbReference type="ChEBI" id="CHEBI:58805"/>
    </ligand>
</feature>
<feature type="binding site" evidence="8 13">
    <location>
        <position position="469"/>
    </location>
    <ligand>
        <name>3',3'-c-di-GMP</name>
        <dbReference type="ChEBI" id="CHEBI:58805"/>
    </ligand>
</feature>
<feature type="binding site" evidence="8 13">
    <location>
        <position position="469"/>
    </location>
    <ligand>
        <name>Mg(2+)</name>
        <dbReference type="ChEBI" id="CHEBI:18420"/>
        <label>1</label>
    </ligand>
</feature>
<feature type="binding site" evidence="8 13">
    <location>
        <position position="472"/>
    </location>
    <ligand>
        <name>3',3'-c-di-GMP</name>
        <dbReference type="ChEBI" id="CHEBI:58805"/>
    </ligand>
</feature>
<feature type="binding site" evidence="8 13">
    <location>
        <position position="473"/>
    </location>
    <ligand>
        <name>3',3'-c-di-GMP</name>
        <dbReference type="ChEBI" id="CHEBI:58805"/>
    </ligand>
</feature>
<feature type="binding site" evidence="8 13">
    <location>
        <position position="528"/>
    </location>
    <ligand>
        <name>3',3'-c-di-GMP</name>
        <dbReference type="ChEBI" id="CHEBI:58805"/>
    </ligand>
</feature>
<feature type="binding site" evidence="8 13">
    <location>
        <position position="528"/>
    </location>
    <ligand>
        <name>Mg(2+)</name>
        <dbReference type="ChEBI" id="CHEBI:18420"/>
        <label>1</label>
    </ligand>
</feature>
<feature type="binding site" evidence="8 13">
    <location>
        <position position="533"/>
    </location>
    <ligand>
        <name>3',3'-c-di-GMP</name>
        <dbReference type="ChEBI" id="CHEBI:58805"/>
    </ligand>
</feature>
<feature type="binding site" evidence="8 13">
    <location>
        <position position="560"/>
    </location>
    <ligand>
        <name>Mg(2+)</name>
        <dbReference type="ChEBI" id="CHEBI:18420"/>
        <label>1</label>
    </ligand>
</feature>
<feature type="binding site" evidence="8 13">
    <location>
        <position position="590"/>
    </location>
    <ligand>
        <name>3',3'-c-di-GMP</name>
        <dbReference type="ChEBI" id="CHEBI:58805"/>
    </ligand>
</feature>
<feature type="binding site" evidence="8 13">
    <location>
        <position position="590"/>
    </location>
    <ligand>
        <name>Mg(2+)</name>
        <dbReference type="ChEBI" id="CHEBI:18420"/>
        <label>1</label>
    </ligand>
</feature>
<feature type="binding site" evidence="8 13">
    <location>
        <position position="590"/>
    </location>
    <ligand>
        <name>Mg(2+)</name>
        <dbReference type="ChEBI" id="CHEBI:18420"/>
        <label>2</label>
    </ligand>
</feature>
<feature type="binding site" evidence="8 13">
    <location>
        <position position="591"/>
    </location>
    <ligand>
        <name>Mg(2+)</name>
        <dbReference type="ChEBI" id="CHEBI:18420"/>
        <label>2</label>
    </ligand>
</feature>
<feature type="binding site" evidence="8 13">
    <location>
        <position position="614"/>
    </location>
    <ligand>
        <name>3',3'-c-di-GMP</name>
        <dbReference type="ChEBI" id="CHEBI:58805"/>
    </ligand>
</feature>
<feature type="binding site" evidence="8 13">
    <location>
        <position position="647"/>
    </location>
    <ligand>
        <name>Mg(2+)</name>
        <dbReference type="ChEBI" id="CHEBI:18420"/>
        <label>2</label>
    </ligand>
</feature>
<feature type="binding site" evidence="8 13">
    <location>
        <position position="650"/>
    </location>
    <ligand>
        <name>3',3'-c-di-GMP</name>
        <dbReference type="ChEBI" id="CHEBI:58805"/>
    </ligand>
</feature>
<feature type="binding site" evidence="8 13">
    <location>
        <position position="669"/>
    </location>
    <ligand>
        <name>3',3'-c-di-GMP</name>
        <dbReference type="ChEBI" id="CHEBI:58805"/>
    </ligand>
</feature>
<feature type="mutagenesis site" description="Loss of diguanylate cyclase activity." evidence="7">
    <original>G</original>
    <variation>A</variation>
    <location>
        <position position="342"/>
    </location>
</feature>
<feature type="helix" evidence="14">
    <location>
        <begin position="436"/>
        <end position="442"/>
    </location>
</feature>
<feature type="turn" evidence="14">
    <location>
        <begin position="443"/>
        <end position="448"/>
    </location>
</feature>
<feature type="strand" evidence="14">
    <location>
        <begin position="450"/>
        <end position="459"/>
    </location>
</feature>
<feature type="turn" evidence="14">
    <location>
        <begin position="460"/>
        <end position="462"/>
    </location>
</feature>
<feature type="strand" evidence="14">
    <location>
        <begin position="465"/>
        <end position="476"/>
    </location>
</feature>
<feature type="turn" evidence="14">
    <location>
        <begin position="477"/>
        <end position="479"/>
    </location>
</feature>
<feature type="strand" evidence="14">
    <location>
        <begin position="480"/>
        <end position="482"/>
    </location>
</feature>
<feature type="helix" evidence="14">
    <location>
        <begin position="484"/>
        <end position="486"/>
    </location>
</feature>
<feature type="helix" evidence="14">
    <location>
        <begin position="488"/>
        <end position="494"/>
    </location>
</feature>
<feature type="helix" evidence="14">
    <location>
        <begin position="497"/>
        <end position="517"/>
    </location>
</feature>
<feature type="strand" evidence="14">
    <location>
        <begin position="524"/>
        <end position="528"/>
    </location>
</feature>
<feature type="helix" evidence="14">
    <location>
        <begin position="531"/>
        <end position="535"/>
    </location>
</feature>
<feature type="helix" evidence="14">
    <location>
        <begin position="539"/>
        <end position="549"/>
    </location>
</feature>
<feature type="helix" evidence="14">
    <location>
        <begin position="554"/>
        <end position="556"/>
    </location>
</feature>
<feature type="strand" evidence="14">
    <location>
        <begin position="557"/>
        <end position="562"/>
    </location>
</feature>
<feature type="helix" evidence="14">
    <location>
        <begin position="563"/>
        <end position="568"/>
    </location>
</feature>
<feature type="helix" evidence="14">
    <location>
        <begin position="570"/>
        <end position="582"/>
    </location>
</feature>
<feature type="strand" evidence="14">
    <location>
        <begin position="586"/>
        <end position="592"/>
    </location>
</feature>
<feature type="helix" evidence="14">
    <location>
        <begin position="599"/>
        <end position="604"/>
    </location>
</feature>
<feature type="strand" evidence="14">
    <location>
        <begin position="609"/>
        <end position="612"/>
    </location>
</feature>
<feature type="helix" evidence="14">
    <location>
        <begin position="614"/>
        <end position="618"/>
    </location>
</feature>
<feature type="helix" evidence="14">
    <location>
        <begin position="620"/>
        <end position="622"/>
    </location>
</feature>
<feature type="helix" evidence="14">
    <location>
        <begin position="624"/>
        <end position="640"/>
    </location>
</feature>
<feature type="strand" evidence="14">
    <location>
        <begin position="643"/>
        <end position="647"/>
    </location>
</feature>
<feature type="helix" evidence="14">
    <location>
        <begin position="652"/>
        <end position="661"/>
    </location>
</feature>
<feature type="strand" evidence="14">
    <location>
        <begin position="664"/>
        <end position="668"/>
    </location>
</feature>
<feature type="turn" evidence="14">
    <location>
        <begin position="669"/>
        <end position="671"/>
    </location>
</feature>
<feature type="helix" evidence="14">
    <location>
        <begin position="677"/>
        <end position="680"/>
    </location>
</feature>
<accession>Q9I310</accession>
<keyword id="KW-0002">3D-structure</keyword>
<keyword id="KW-0973">c-di-GMP</keyword>
<keyword id="KW-0997">Cell inner membrane</keyword>
<keyword id="KW-1003">Cell membrane</keyword>
<keyword id="KW-0378">Hydrolase</keyword>
<keyword id="KW-0460">Magnesium</keyword>
<keyword id="KW-0472">Membrane</keyword>
<keyword id="KW-0479">Metal-binding</keyword>
<keyword id="KW-1185">Reference proteome</keyword>
<keyword id="KW-0808">Transferase</keyword>
<keyword id="KW-0812">Transmembrane</keyword>
<keyword id="KW-1133">Transmembrane helix</keyword>
<protein>
    <recommendedName>
        <fullName evidence="10">Bifunctional diguanylate cyclase/cyclic di-GMP phosphodiesterase MucR</fullName>
        <shortName evidence="10">DGC/PDE</shortName>
        <ecNumber evidence="5 7">2.7.7.65</ecNumber>
        <ecNumber evidence="7">3.1.4.52</ecNumber>
    </recommendedName>
    <alternativeName>
        <fullName evidence="9">c-di-GMP-synthesizing enzyme</fullName>
    </alternativeName>
</protein>
<sequence length="685" mass="74379">MLISSYNQVLVAFSLIVAILASYTALDMAGRVTLAKGREALSWLIGGAFAMGFGIWSMHFVGMLAFSLPIPLGYDLGLTLLSLLLAVGSSAFALWLVCQAELPWQRLALGALLMGSGIAAMHYTGMAALLMMPGIVYDPLWLGLSILIAVIASGAALWIAFRLRHGSRRIVLVRAGAALVMGCAIVGMHYTGMAAAQFPLGSFCGAAGRGIDNGWLAVLVIVITLAVIAIALIVSVLDSRLEARTSVLATSLARANRELIQLALHDNLTKLPNRMLLDDRLEQAIQQAIRDDRRFAVLFMDLDGFKAVNDAYGHHLGDLLLIEVAERIRANVRAQDTIARLGGDEFVLLIEAREPADAATLAEKLVKRISQPYQISRHEVRISASIGIALYPGDGQTRHELMINADAAMYHAKDQGRNGYCFFESSMNANAQEQLQLLHDLRQALERRQLVLHYQPKVLAPNGPMIGVEALLRWEHPQHGLITPGQFLPLAEKTGLIVQIGEWVLDEACRQMRLWLDGGHADWNIAVNLSALQFAHAGLVDSVRNALLRHSLEPSHLILEVTESTAMRDADASLVILEQLSAMGVGISIDDFGTGYSSLLYLKRLPASELKIDRGFINELAHDSDDAAIVSAIVALGRTLNLKIVAEGVETEAQQEFLTRLGCNSLQGFLLGRPMPAEQLLASVA</sequence>